<dbReference type="EMBL" id="M89919">
    <property type="protein sequence ID" value="AAA32486.1"/>
    <property type="molecule type" value="Genomic_DNA"/>
</dbReference>
<dbReference type="EMBL" id="AF158101">
    <property type="protein sequence ID" value="AAD42464.1"/>
    <property type="molecule type" value="Genomic_DNA"/>
</dbReference>
<dbReference type="PIR" id="JS0564">
    <property type="entry name" value="D45731"/>
</dbReference>
<dbReference type="RefSeq" id="NP_049623.1">
    <property type="nucleotide sequence ID" value="NC_000866.4"/>
</dbReference>
<dbReference type="SMR" id="Q01434"/>
<dbReference type="GeneID" id="1258588"/>
<dbReference type="KEGG" id="vg:1258588"/>
<dbReference type="OrthoDB" id="25985at10239"/>
<dbReference type="Proteomes" id="UP000009087">
    <property type="component" value="Segment"/>
</dbReference>
<dbReference type="InterPro" id="IPR013429">
    <property type="entry name" value="Regulatory_FmdB_Zinc_ribbon"/>
</dbReference>
<dbReference type="NCBIfam" id="TIGR02605">
    <property type="entry name" value="CxxC_CxxC_SSSS"/>
    <property type="match status" value="1"/>
</dbReference>
<dbReference type="Pfam" id="PF09723">
    <property type="entry name" value="Zn_ribbon_8"/>
    <property type="match status" value="1"/>
</dbReference>
<dbReference type="SMART" id="SM00834">
    <property type="entry name" value="CxxC_CXXC_SSSS"/>
    <property type="match status" value="1"/>
</dbReference>
<organismHost>
    <name type="scientific">Escherichia coli</name>
    <dbReference type="NCBI Taxonomy" id="562"/>
</organismHost>
<name>Y00D_BPT4</name>
<reference key="1">
    <citation type="journal article" date="1992" name="J. Bacteriol.">
        <title>Sequence and characterization of the bacteriophage T4 comC alpha gene product, a possible transcription antitermination factor.</title>
        <authorList>
            <person name="Sanson B."/>
            <person name="Uzan M."/>
        </authorList>
    </citation>
    <scope>NUCLEOTIDE SEQUENCE [GENOMIC DNA]</scope>
</reference>
<reference key="2">
    <citation type="journal article" date="2003" name="Microbiol. Mol. Biol. Rev.">
        <title>Bacteriophage T4 genome.</title>
        <authorList>
            <person name="Miller E.S."/>
            <person name="Kutter E."/>
            <person name="Mosig G."/>
            <person name="Arisaka F."/>
            <person name="Kunisawa T."/>
            <person name="Ruger W."/>
        </authorList>
    </citation>
    <scope>NUCLEOTIDE SEQUENCE [LARGE SCALE GENOMIC DNA]</scope>
</reference>
<sequence length="45" mass="5107">MPLYDYKCQSKDCAKEYEKIKKISGRDTGVCPDCHRLAVRLVSAS</sequence>
<organism>
    <name type="scientific">Enterobacteria phage T4</name>
    <name type="common">Bacteriophage T4</name>
    <dbReference type="NCBI Taxonomy" id="10665"/>
    <lineage>
        <taxon>Viruses</taxon>
        <taxon>Duplodnaviria</taxon>
        <taxon>Heunggongvirae</taxon>
        <taxon>Uroviricota</taxon>
        <taxon>Caudoviricetes</taxon>
        <taxon>Straboviridae</taxon>
        <taxon>Tevenvirinae</taxon>
        <taxon>Tequatrovirus</taxon>
    </lineage>
</organism>
<feature type="chain" id="PRO_0000165079" description="Uncharacterized 5.1 kDa protein in Gp39-comCA intergenic region">
    <location>
        <begin position="1"/>
        <end position="45"/>
    </location>
</feature>
<protein>
    <recommendedName>
        <fullName>Uncharacterized 5.1 kDa protein in Gp39-comCA intergenic region</fullName>
    </recommendedName>
</protein>
<keyword id="KW-1185">Reference proteome</keyword>
<gene>
    <name type="primary">y00D</name>
    <name type="synonym">39.2</name>
    <name type="synonym">comCA.-1</name>
</gene>
<proteinExistence type="predicted"/>
<accession>Q01434</accession>